<protein>
    <recommendedName>
        <fullName>Peptidyl-prolyl cis-trans isomerase pin1</fullName>
        <shortName>PPIase pin1</shortName>
        <ecNumber>5.2.1.8</ecNumber>
    </recommendedName>
</protein>
<comment type="function">
    <text evidence="3">Has a role in the G1/S stage transition of mitosis where it is involved in the dephosphorylation of cdc25 and wee1.</text>
</comment>
<comment type="catalytic activity">
    <reaction>
        <text>[protein]-peptidylproline (omega=180) = [protein]-peptidylproline (omega=0)</text>
        <dbReference type="Rhea" id="RHEA:16237"/>
        <dbReference type="Rhea" id="RHEA-COMP:10747"/>
        <dbReference type="Rhea" id="RHEA-COMP:10748"/>
        <dbReference type="ChEBI" id="CHEBI:83833"/>
        <dbReference type="ChEBI" id="CHEBI:83834"/>
        <dbReference type="EC" id="5.2.1.8"/>
    </reaction>
</comment>
<comment type="subcellular location">
    <subcellularLocation>
        <location evidence="3">Nucleus</location>
    </subcellularLocation>
</comment>
<accession>O74448</accession>
<feature type="chain" id="PRO_0000193443" description="Peptidyl-prolyl cis-trans isomerase pin1">
    <location>
        <begin position="1"/>
        <end position="175"/>
    </location>
</feature>
<feature type="domain" description="WW" evidence="1">
    <location>
        <begin position="4"/>
        <end position="38"/>
    </location>
</feature>
<feature type="domain" description="PpiC" evidence="2">
    <location>
        <begin position="64"/>
        <end position="175"/>
    </location>
</feature>
<dbReference type="EC" id="5.2.1.8"/>
<dbReference type="EMBL" id="CU329672">
    <property type="protein sequence ID" value="CAA20742.1"/>
    <property type="molecule type" value="Genomic_DNA"/>
</dbReference>
<dbReference type="PIR" id="T41093">
    <property type="entry name" value="T41093"/>
</dbReference>
<dbReference type="RefSeq" id="NP_587913.1">
    <property type="nucleotide sequence ID" value="NM_001022904.2"/>
</dbReference>
<dbReference type="SMR" id="O74448"/>
<dbReference type="BioGRID" id="275788">
    <property type="interactions" value="7"/>
</dbReference>
<dbReference type="FunCoup" id="O74448">
    <property type="interactions" value="722"/>
</dbReference>
<dbReference type="STRING" id="284812.O74448"/>
<dbReference type="iPTMnet" id="O74448"/>
<dbReference type="PaxDb" id="4896-SPCC16C4.03.1"/>
<dbReference type="EnsemblFungi" id="SPCC16C4.03.1">
    <property type="protein sequence ID" value="SPCC16C4.03.1:pep"/>
    <property type="gene ID" value="SPCC16C4.03"/>
</dbReference>
<dbReference type="GeneID" id="2539218"/>
<dbReference type="KEGG" id="spo:2539218"/>
<dbReference type="PomBase" id="SPCC16C4.03">
    <property type="gene designation" value="pin1"/>
</dbReference>
<dbReference type="VEuPathDB" id="FungiDB:SPCC16C4.03"/>
<dbReference type="eggNOG" id="KOG3259">
    <property type="taxonomic scope" value="Eukaryota"/>
</dbReference>
<dbReference type="HOGENOM" id="CLU_090028_0_0_1"/>
<dbReference type="InParanoid" id="O74448"/>
<dbReference type="OMA" id="DEVQCLH"/>
<dbReference type="PhylomeDB" id="O74448"/>
<dbReference type="Reactome" id="R-SPO-5668599">
    <property type="pathway name" value="RHO GTPases Activate NADPH Oxidases"/>
</dbReference>
<dbReference type="Reactome" id="R-SPO-6811555">
    <property type="pathway name" value="PI5P Regulates TP53 Acetylation"/>
</dbReference>
<dbReference type="PRO" id="PR:O74448"/>
<dbReference type="Proteomes" id="UP000002485">
    <property type="component" value="Chromosome III"/>
</dbReference>
<dbReference type="GO" id="GO:0005829">
    <property type="term" value="C:cytosol"/>
    <property type="evidence" value="ECO:0000318"/>
    <property type="project" value="GO_Central"/>
</dbReference>
<dbReference type="GO" id="GO:0005634">
    <property type="term" value="C:nucleus"/>
    <property type="evidence" value="ECO:0000314"/>
    <property type="project" value="PomBase"/>
</dbReference>
<dbReference type="GO" id="GO:0140463">
    <property type="term" value="F:chromatin-protein adaptor activity"/>
    <property type="evidence" value="ECO:0000353"/>
    <property type="project" value="PomBase"/>
</dbReference>
<dbReference type="GO" id="GO:0003755">
    <property type="term" value="F:peptidyl-prolyl cis-trans isomerase activity"/>
    <property type="evidence" value="ECO:0000314"/>
    <property type="project" value="PomBase"/>
</dbReference>
<dbReference type="GO" id="GO:0051301">
    <property type="term" value="P:cell division"/>
    <property type="evidence" value="ECO:0007669"/>
    <property type="project" value="UniProtKB-KW"/>
</dbReference>
<dbReference type="GO" id="GO:0180010">
    <property type="term" value="P:co-transcriptional mRNA 3'-end processing, cleavage and polyadenylation pathway"/>
    <property type="evidence" value="ECO:0000315"/>
    <property type="project" value="PomBase"/>
</dbReference>
<dbReference type="GO" id="GO:0060261">
    <property type="term" value="P:positive regulation of transcription initiation by RNA polymerase II"/>
    <property type="evidence" value="ECO:0000315"/>
    <property type="project" value="PomBase"/>
</dbReference>
<dbReference type="CDD" id="cd00201">
    <property type="entry name" value="WW"/>
    <property type="match status" value="1"/>
</dbReference>
<dbReference type="FunFam" id="3.10.50.40:FF:000026">
    <property type="entry name" value="Peptidyl-prolyl cis-trans isomerase"/>
    <property type="match status" value="1"/>
</dbReference>
<dbReference type="Gene3D" id="2.20.70.10">
    <property type="match status" value="1"/>
</dbReference>
<dbReference type="Gene3D" id="3.10.50.40">
    <property type="match status" value="1"/>
</dbReference>
<dbReference type="InterPro" id="IPR046357">
    <property type="entry name" value="PPIase_dom_sf"/>
</dbReference>
<dbReference type="InterPro" id="IPR051370">
    <property type="entry name" value="PPIase_Pin1"/>
</dbReference>
<dbReference type="InterPro" id="IPR000297">
    <property type="entry name" value="PPIase_PpiC"/>
</dbReference>
<dbReference type="InterPro" id="IPR001202">
    <property type="entry name" value="WW_dom"/>
</dbReference>
<dbReference type="InterPro" id="IPR036020">
    <property type="entry name" value="WW_dom_sf"/>
</dbReference>
<dbReference type="PANTHER" id="PTHR10657">
    <property type="entry name" value="PEPTIDYL-PROLYL CIS-TRANS ISOMERASE"/>
    <property type="match status" value="1"/>
</dbReference>
<dbReference type="PANTHER" id="PTHR10657:SF4">
    <property type="entry name" value="PEPTIDYL-PROLYL CIS-TRANS ISOMERASE-RELATED"/>
    <property type="match status" value="1"/>
</dbReference>
<dbReference type="Pfam" id="PF00639">
    <property type="entry name" value="Rotamase"/>
    <property type="match status" value="1"/>
</dbReference>
<dbReference type="Pfam" id="PF00397">
    <property type="entry name" value="WW"/>
    <property type="match status" value="1"/>
</dbReference>
<dbReference type="SMART" id="SM00456">
    <property type="entry name" value="WW"/>
    <property type="match status" value="1"/>
</dbReference>
<dbReference type="SUPFAM" id="SSF54534">
    <property type="entry name" value="FKBP-like"/>
    <property type="match status" value="1"/>
</dbReference>
<dbReference type="SUPFAM" id="SSF51045">
    <property type="entry name" value="WW domain"/>
    <property type="match status" value="1"/>
</dbReference>
<dbReference type="PROSITE" id="PS50198">
    <property type="entry name" value="PPIC_PPIASE_2"/>
    <property type="match status" value="1"/>
</dbReference>
<dbReference type="PROSITE" id="PS50020">
    <property type="entry name" value="WW_DOMAIN_2"/>
    <property type="match status" value="1"/>
</dbReference>
<name>PIN1_SCHPO</name>
<organism>
    <name type="scientific">Schizosaccharomyces pombe (strain 972 / ATCC 24843)</name>
    <name type="common">Fission yeast</name>
    <dbReference type="NCBI Taxonomy" id="284812"/>
    <lineage>
        <taxon>Eukaryota</taxon>
        <taxon>Fungi</taxon>
        <taxon>Dikarya</taxon>
        <taxon>Ascomycota</taxon>
        <taxon>Taphrinomycotina</taxon>
        <taxon>Schizosaccharomycetes</taxon>
        <taxon>Schizosaccharomycetales</taxon>
        <taxon>Schizosaccharomycetaceae</taxon>
        <taxon>Schizosaccharomyces</taxon>
    </lineage>
</organism>
<gene>
    <name type="primary">pin1</name>
    <name type="ORF">SPCC16C4.03</name>
</gene>
<reference key="1">
    <citation type="journal article" date="2002" name="Nature">
        <title>The genome sequence of Schizosaccharomyces pombe.</title>
        <authorList>
            <person name="Wood V."/>
            <person name="Gwilliam R."/>
            <person name="Rajandream M.A."/>
            <person name="Lyne M.H."/>
            <person name="Lyne R."/>
            <person name="Stewart A."/>
            <person name="Sgouros J.G."/>
            <person name="Peat N."/>
            <person name="Hayles J."/>
            <person name="Baker S.G."/>
            <person name="Basham D."/>
            <person name="Bowman S."/>
            <person name="Brooks K."/>
            <person name="Brown D."/>
            <person name="Brown S."/>
            <person name="Chillingworth T."/>
            <person name="Churcher C.M."/>
            <person name="Collins M."/>
            <person name="Connor R."/>
            <person name="Cronin A."/>
            <person name="Davis P."/>
            <person name="Feltwell T."/>
            <person name="Fraser A."/>
            <person name="Gentles S."/>
            <person name="Goble A."/>
            <person name="Hamlin N."/>
            <person name="Harris D.E."/>
            <person name="Hidalgo J."/>
            <person name="Hodgson G."/>
            <person name="Holroyd S."/>
            <person name="Hornsby T."/>
            <person name="Howarth S."/>
            <person name="Huckle E.J."/>
            <person name="Hunt S."/>
            <person name="Jagels K."/>
            <person name="James K.D."/>
            <person name="Jones L."/>
            <person name="Jones M."/>
            <person name="Leather S."/>
            <person name="McDonald S."/>
            <person name="McLean J."/>
            <person name="Mooney P."/>
            <person name="Moule S."/>
            <person name="Mungall K.L."/>
            <person name="Murphy L.D."/>
            <person name="Niblett D."/>
            <person name="Odell C."/>
            <person name="Oliver K."/>
            <person name="O'Neil S."/>
            <person name="Pearson D."/>
            <person name="Quail M.A."/>
            <person name="Rabbinowitsch E."/>
            <person name="Rutherford K.M."/>
            <person name="Rutter S."/>
            <person name="Saunders D."/>
            <person name="Seeger K."/>
            <person name="Sharp S."/>
            <person name="Skelton J."/>
            <person name="Simmonds M.N."/>
            <person name="Squares R."/>
            <person name="Squares S."/>
            <person name="Stevens K."/>
            <person name="Taylor K."/>
            <person name="Taylor R.G."/>
            <person name="Tivey A."/>
            <person name="Walsh S.V."/>
            <person name="Warren T."/>
            <person name="Whitehead S."/>
            <person name="Woodward J.R."/>
            <person name="Volckaert G."/>
            <person name="Aert R."/>
            <person name="Robben J."/>
            <person name="Grymonprez B."/>
            <person name="Weltjens I."/>
            <person name="Vanstreels E."/>
            <person name="Rieger M."/>
            <person name="Schaefer M."/>
            <person name="Mueller-Auer S."/>
            <person name="Gabel C."/>
            <person name="Fuchs M."/>
            <person name="Duesterhoeft A."/>
            <person name="Fritzc C."/>
            <person name="Holzer E."/>
            <person name="Moestl D."/>
            <person name="Hilbert H."/>
            <person name="Borzym K."/>
            <person name="Langer I."/>
            <person name="Beck A."/>
            <person name="Lehrach H."/>
            <person name="Reinhardt R."/>
            <person name="Pohl T.M."/>
            <person name="Eger P."/>
            <person name="Zimmermann W."/>
            <person name="Wedler H."/>
            <person name="Wambutt R."/>
            <person name="Purnelle B."/>
            <person name="Goffeau A."/>
            <person name="Cadieu E."/>
            <person name="Dreano S."/>
            <person name="Gloux S."/>
            <person name="Lelaure V."/>
            <person name="Mottier S."/>
            <person name="Galibert F."/>
            <person name="Aves S.J."/>
            <person name="Xiang Z."/>
            <person name="Hunt C."/>
            <person name="Moore K."/>
            <person name="Hurst S.M."/>
            <person name="Lucas M."/>
            <person name="Rochet M."/>
            <person name="Gaillardin C."/>
            <person name="Tallada V.A."/>
            <person name="Garzon A."/>
            <person name="Thode G."/>
            <person name="Daga R.R."/>
            <person name="Cruzado L."/>
            <person name="Jimenez J."/>
            <person name="Sanchez M."/>
            <person name="del Rey F."/>
            <person name="Benito J."/>
            <person name="Dominguez A."/>
            <person name="Revuelta J.L."/>
            <person name="Moreno S."/>
            <person name="Armstrong J."/>
            <person name="Forsburg S.L."/>
            <person name="Cerutti L."/>
            <person name="Lowe T."/>
            <person name="McCombie W.R."/>
            <person name="Paulsen I."/>
            <person name="Potashkin J."/>
            <person name="Shpakovski G.V."/>
            <person name="Ussery D."/>
            <person name="Barrell B.G."/>
            <person name="Nurse P."/>
        </authorList>
    </citation>
    <scope>NUCLEOTIDE SEQUENCE [LARGE SCALE GENOMIC DNA]</scope>
    <source>
        <strain>972 / ATCC 24843</strain>
    </source>
</reference>
<reference key="2">
    <citation type="journal article" date="2001" name="J. Cell Sci.">
        <title>Isolation and characterization of the Pin1/Ess1p homologue in Schizosaccharomyces pombe.</title>
        <authorList>
            <person name="Huang H.-K."/>
            <person name="Forsburg S.L."/>
            <person name="John U.P."/>
            <person name="O'Connell M.J."/>
            <person name="Hunter T."/>
        </authorList>
    </citation>
    <scope>FUNCTION</scope>
    <scope>SUBCELLULAR LOCATION</scope>
</reference>
<keyword id="KW-0131">Cell cycle</keyword>
<keyword id="KW-0132">Cell division</keyword>
<keyword id="KW-0413">Isomerase</keyword>
<keyword id="KW-0498">Mitosis</keyword>
<keyword id="KW-0539">Nucleus</keyword>
<keyword id="KW-1185">Reference proteome</keyword>
<keyword id="KW-0697">Rotamase</keyword>
<evidence type="ECO:0000255" key="1">
    <source>
        <dbReference type="PROSITE-ProRule" id="PRU00224"/>
    </source>
</evidence>
<evidence type="ECO:0000255" key="2">
    <source>
        <dbReference type="PROSITE-ProRule" id="PRU00278"/>
    </source>
</evidence>
<evidence type="ECO:0000269" key="3">
    <source>
    </source>
</evidence>
<proteinExistence type="predicted"/>
<sequence>MSNTGLPKPWIVKISRSRNRPYFFNTETHESLWEPPAATDMAALKKFIANELQESVTPTEASNSPKIRASHLLVKHRESRRPSSWKEEHITRSKEEARKLAEHYEQLLKSGSVSMHDLAMKESDCSSARRGGELGEFGRDEMQKPFEDAAFALKPGEISGVVETSSGFHIIQRHA</sequence>